<dbReference type="EMBL" id="CP000395">
    <property type="protein sequence ID" value="ABH01774.1"/>
    <property type="molecule type" value="Genomic_DNA"/>
</dbReference>
<dbReference type="EMBL" id="CP002933">
    <property type="protein sequence ID" value="AEL69727.1"/>
    <property type="molecule type" value="Genomic_DNA"/>
</dbReference>
<dbReference type="RefSeq" id="WP_004789857.1">
    <property type="nucleotide sequence ID" value="NZ_CP160066.1"/>
</dbReference>
<dbReference type="SMR" id="Q0SN04"/>
<dbReference type="STRING" id="29518.BLA32_01745"/>
<dbReference type="GeneID" id="77265350"/>
<dbReference type="KEGG" id="baf:BAPKO_0531"/>
<dbReference type="KEGG" id="bafz:BafPKo_0519"/>
<dbReference type="PATRIC" id="fig|390236.22.peg.500"/>
<dbReference type="eggNOG" id="COG0203">
    <property type="taxonomic scope" value="Bacteria"/>
</dbReference>
<dbReference type="HOGENOM" id="CLU_074407_2_0_12"/>
<dbReference type="OrthoDB" id="9809073at2"/>
<dbReference type="Proteomes" id="UP000005216">
    <property type="component" value="Chromosome"/>
</dbReference>
<dbReference type="GO" id="GO:0022625">
    <property type="term" value="C:cytosolic large ribosomal subunit"/>
    <property type="evidence" value="ECO:0007669"/>
    <property type="project" value="TreeGrafter"/>
</dbReference>
<dbReference type="GO" id="GO:0003735">
    <property type="term" value="F:structural constituent of ribosome"/>
    <property type="evidence" value="ECO:0007669"/>
    <property type="project" value="InterPro"/>
</dbReference>
<dbReference type="GO" id="GO:0006412">
    <property type="term" value="P:translation"/>
    <property type="evidence" value="ECO:0007669"/>
    <property type="project" value="UniProtKB-UniRule"/>
</dbReference>
<dbReference type="Gene3D" id="3.90.1030.10">
    <property type="entry name" value="Ribosomal protein L17"/>
    <property type="match status" value="1"/>
</dbReference>
<dbReference type="HAMAP" id="MF_01368">
    <property type="entry name" value="Ribosomal_bL17"/>
    <property type="match status" value="1"/>
</dbReference>
<dbReference type="InterPro" id="IPR000456">
    <property type="entry name" value="Ribosomal_bL17"/>
</dbReference>
<dbReference type="InterPro" id="IPR047859">
    <property type="entry name" value="Ribosomal_bL17_CS"/>
</dbReference>
<dbReference type="InterPro" id="IPR036373">
    <property type="entry name" value="Ribosomal_bL17_sf"/>
</dbReference>
<dbReference type="NCBIfam" id="TIGR00059">
    <property type="entry name" value="L17"/>
    <property type="match status" value="1"/>
</dbReference>
<dbReference type="PANTHER" id="PTHR14413:SF16">
    <property type="entry name" value="LARGE RIBOSOMAL SUBUNIT PROTEIN BL17M"/>
    <property type="match status" value="1"/>
</dbReference>
<dbReference type="PANTHER" id="PTHR14413">
    <property type="entry name" value="RIBOSOMAL PROTEIN L17"/>
    <property type="match status" value="1"/>
</dbReference>
<dbReference type="Pfam" id="PF01196">
    <property type="entry name" value="Ribosomal_L17"/>
    <property type="match status" value="1"/>
</dbReference>
<dbReference type="SUPFAM" id="SSF64263">
    <property type="entry name" value="Prokaryotic ribosomal protein L17"/>
    <property type="match status" value="1"/>
</dbReference>
<dbReference type="PROSITE" id="PS01167">
    <property type="entry name" value="RIBOSOMAL_L17"/>
    <property type="match status" value="1"/>
</dbReference>
<keyword id="KW-0687">Ribonucleoprotein</keyword>
<keyword id="KW-0689">Ribosomal protein</keyword>
<sequence>MKAKLGFNRLSRKSSHRRALLKNMVISFLKHEKISSTKAKLFEVKRFSERLITKAKVDTVHNRRELSKFIHDKYILNKLFTKISPVFRQRSGGYTRMIKLGKRYGDAAEMAILELVEKPLKAE</sequence>
<gene>
    <name evidence="1" type="primary">rplQ</name>
    <name type="ordered locus">BAPKO_0531</name>
    <name type="ordered locus">BafPKo_0519</name>
</gene>
<reference key="1">
    <citation type="journal article" date="2006" name="BMC Genomics">
        <title>Comparative genome analysis: selection pressure on the Borrelia vls cassettes is essential for infectivity.</title>
        <authorList>
            <person name="Gloeckner G."/>
            <person name="Schulte-Spechtel U."/>
            <person name="Schilhabel M."/>
            <person name="Felder M."/>
            <person name="Suehnel J."/>
            <person name="Wilske B."/>
            <person name="Platzer M."/>
        </authorList>
    </citation>
    <scope>NUCLEOTIDE SEQUENCE [LARGE SCALE GENOMIC DNA]</scope>
    <source>
        <strain>PKo</strain>
    </source>
</reference>
<reference key="2">
    <citation type="journal article" date="2011" name="J. Bacteriol.">
        <title>Whole-genome sequences of two Borrelia afzelii and two Borrelia garinii Lyme disease agent isolates.</title>
        <authorList>
            <person name="Casjens S.R."/>
            <person name="Mongodin E.F."/>
            <person name="Qiu W.G."/>
            <person name="Dunn J.J."/>
            <person name="Luft B.J."/>
            <person name="Fraser-Liggett C.M."/>
            <person name="Schutzer S.E."/>
        </authorList>
    </citation>
    <scope>NUCLEOTIDE SEQUENCE [LARGE SCALE GENOMIC DNA]</scope>
    <source>
        <strain>PKo</strain>
    </source>
</reference>
<accession>Q0SN04</accession>
<accession>G0ISE6</accession>
<proteinExistence type="inferred from homology"/>
<comment type="subunit">
    <text evidence="1">Part of the 50S ribosomal subunit. Contacts protein L32.</text>
</comment>
<comment type="similarity">
    <text evidence="1">Belongs to the bacterial ribosomal protein bL17 family.</text>
</comment>
<evidence type="ECO:0000255" key="1">
    <source>
        <dbReference type="HAMAP-Rule" id="MF_01368"/>
    </source>
</evidence>
<evidence type="ECO:0000305" key="2"/>
<name>RL17_BORAP</name>
<feature type="chain" id="PRO_1000055777" description="Large ribosomal subunit protein bL17">
    <location>
        <begin position="1"/>
        <end position="123"/>
    </location>
</feature>
<organism>
    <name type="scientific">Borreliella afzelii (strain PKo)</name>
    <name type="common">Borrelia afzelii</name>
    <dbReference type="NCBI Taxonomy" id="390236"/>
    <lineage>
        <taxon>Bacteria</taxon>
        <taxon>Pseudomonadati</taxon>
        <taxon>Spirochaetota</taxon>
        <taxon>Spirochaetia</taxon>
        <taxon>Spirochaetales</taxon>
        <taxon>Borreliaceae</taxon>
        <taxon>Borreliella</taxon>
    </lineage>
</organism>
<protein>
    <recommendedName>
        <fullName evidence="1">Large ribosomal subunit protein bL17</fullName>
    </recommendedName>
    <alternativeName>
        <fullName evidence="2">50S ribosomal protein L17</fullName>
    </alternativeName>
</protein>